<proteinExistence type="predicted"/>
<gene>
    <name type="primary">S6</name>
</gene>
<protein>
    <recommendedName>
        <fullName>Uncharacterized protein VP6</fullName>
    </recommendedName>
</protein>
<dbReference type="EMBL" id="DQ126106">
    <property type="protein sequence ID" value="AAZ94046.1"/>
    <property type="molecule type" value="Genomic_RNA"/>
</dbReference>
<dbReference type="RefSeq" id="YP_654549.1">
    <property type="nucleotide sequence ID" value="NC_008176.1"/>
</dbReference>
<dbReference type="KEGG" id="vg:5076668"/>
<dbReference type="Proteomes" id="UP000000349">
    <property type="component" value="Genome"/>
</dbReference>
<organismHost>
    <name type="scientific">Micromonas pusilla</name>
    <name type="common">Picoplanktonic green alga</name>
    <name type="synonym">Chromulina pusilla</name>
    <dbReference type="NCBI Taxonomy" id="38833"/>
</organismHost>
<accession>Q1I0U6</accession>
<organism>
    <name type="scientific">Micromonas pusilla reovirus (isolate Netherlands/2005)</name>
    <name type="common">MpRV</name>
    <dbReference type="NCBI Taxonomy" id="649596"/>
    <lineage>
        <taxon>Viruses</taxon>
        <taxon>Riboviria</taxon>
        <taxon>Orthornavirae</taxon>
        <taxon>Duplornaviricota</taxon>
        <taxon>Resentoviricetes</taxon>
        <taxon>Reovirales</taxon>
        <taxon>Sedoreoviridae</taxon>
        <taxon>Mimoreovirus</taxon>
        <taxon>Micromonas pusilla reovirus</taxon>
    </lineage>
</organism>
<name>VP6_MPRVN</name>
<feature type="chain" id="PRO_0000404166" description="Uncharacterized protein VP6">
    <location>
        <begin position="1"/>
        <end position="521"/>
    </location>
</feature>
<feature type="region of interest" description="Disordered" evidence="1">
    <location>
        <begin position="1"/>
        <end position="20"/>
    </location>
</feature>
<feature type="compositionally biased region" description="Polar residues" evidence="1">
    <location>
        <begin position="1"/>
        <end position="15"/>
    </location>
</feature>
<reference key="1">
    <citation type="journal article" date="2006" name="J. Gen. Virol.">
        <title>Micromonas pusilla reovirus: a new member of the family Reoviridae assigned to a novel proposed genus (Mimoreovirus).</title>
        <authorList>
            <person name="Attoui H."/>
            <person name="Jaafar F.M."/>
            <person name="Belhouchet M."/>
            <person name="de Micco P."/>
            <person name="de Lamballerie X."/>
            <person name="Brussaard C.P."/>
        </authorList>
    </citation>
    <scope>NUCLEOTIDE SEQUENCE [GENOMIC RNA]</scope>
</reference>
<evidence type="ECO:0000256" key="1">
    <source>
        <dbReference type="SAM" id="MobiDB-lite"/>
    </source>
</evidence>
<keyword id="KW-1185">Reference proteome</keyword>
<sequence>MLSFRNQPGNPSGNLTFGGVSNRAREPRALEIRLDQDFAEGERGVHFVATPDPNVDRRGTLCSADVQYILKNVLSHYNSSNDTISVSKRAKSLRIIQELKLRYGLTDEMLQKLSSLLLSSPLMSDTMDGRRKVTDIISTCASLNSKSTLSDIRGKFFNDYVRYGGNLTHVNVNTRSSASVQDDIPIVLTVMNLPGKTSQAYVVGDDTVNLKLICRKSTSVYNMNPDDEEMRTFENKTETRVISTQLSEGSAEYKYFLTFIQEARLAAHNENLTMYELTKSFNINAPLDANGLKEVKKETRDQVMYLEFGSSIEANLIFQTRAVKPNARSHHKRIAAAFQPMCAFIAWMIESDEVSRGSPDQQKLYYGAFGGDAPLGFQRELRNLMRSLYWTEGIKYDAENDLYPKCWTMADHGPPDSNNYNFEIEHRKIILAMYVLEHLREHGRMPHRFAQKFSTGVSRTPPVIGAVARALRKVCVDDTLWCEHVLRTTRKNDPQRTKVTILDAAAQIFLQNVSRNAPKPR</sequence>